<protein>
    <recommendedName>
        <fullName evidence="1">Small ribosomal subunit protein uS9</fullName>
    </recommendedName>
    <alternativeName>
        <fullName evidence="2">30S ribosomal protein S9</fullName>
    </alternativeName>
</protein>
<keyword id="KW-0687">Ribonucleoprotein</keyword>
<keyword id="KW-0689">Ribosomal protein</keyword>
<evidence type="ECO:0000255" key="1">
    <source>
        <dbReference type="HAMAP-Rule" id="MF_00532"/>
    </source>
</evidence>
<evidence type="ECO:0000305" key="2"/>
<gene>
    <name evidence="1" type="primary">rpsI</name>
    <name type="ordered locus">mhp671</name>
</gene>
<accession>Q5ZZN6</accession>
<comment type="similarity">
    <text evidence="1">Belongs to the universal ribosomal protein uS9 family.</text>
</comment>
<feature type="chain" id="PRO_1000072521" description="Small ribosomal subunit protein uS9">
    <location>
        <begin position="1"/>
        <end position="132"/>
    </location>
</feature>
<name>RS9_MESH2</name>
<organism>
    <name type="scientific">Mesomycoplasma hyopneumoniae (strain 232)</name>
    <name type="common">Mycoplasma hyopneumoniae</name>
    <dbReference type="NCBI Taxonomy" id="295358"/>
    <lineage>
        <taxon>Bacteria</taxon>
        <taxon>Bacillati</taxon>
        <taxon>Mycoplasmatota</taxon>
        <taxon>Mycoplasmoidales</taxon>
        <taxon>Metamycoplasmataceae</taxon>
        <taxon>Mesomycoplasma</taxon>
    </lineage>
</organism>
<sequence length="132" mass="14652">MNQPELSYYGTGRRKSSVARVTLKHGNGQFKINNRVAKEYLKSDILIKDALQPLSITNTVSEFNIRVNAHGGGISGQAGAIRLGIARALLKVSADYRPGLKVAGMLTRDARAKERKKFGLRKARRARQFSKR</sequence>
<proteinExistence type="inferred from homology"/>
<reference key="1">
    <citation type="journal article" date="2004" name="J. Bacteriol.">
        <title>The genome sequence of Mycoplasma hyopneumoniae strain 232, the agent of swine mycoplasmosis.</title>
        <authorList>
            <person name="Minion F.C."/>
            <person name="Lefkowitz E.J."/>
            <person name="Madsen M.L."/>
            <person name="Cleary B.J."/>
            <person name="Swartzell S.M."/>
            <person name="Mahairas G.G."/>
        </authorList>
    </citation>
    <scope>NUCLEOTIDE SEQUENCE [LARGE SCALE GENOMIC DNA]</scope>
    <source>
        <strain>232</strain>
    </source>
</reference>
<dbReference type="EMBL" id="AE017332">
    <property type="protein sequence ID" value="AAV28024.1"/>
    <property type="molecule type" value="Genomic_DNA"/>
</dbReference>
<dbReference type="RefSeq" id="WP_011206502.1">
    <property type="nucleotide sequence ID" value="NC_006360.1"/>
</dbReference>
<dbReference type="SMR" id="Q5ZZN6"/>
<dbReference type="GeneID" id="41334953"/>
<dbReference type="KEGG" id="mhy:mhp671"/>
<dbReference type="eggNOG" id="COG0103">
    <property type="taxonomic scope" value="Bacteria"/>
</dbReference>
<dbReference type="HOGENOM" id="CLU_046483_2_1_14"/>
<dbReference type="PhylomeDB" id="Q5ZZN6"/>
<dbReference type="Proteomes" id="UP000006822">
    <property type="component" value="Chromosome"/>
</dbReference>
<dbReference type="GO" id="GO:0022627">
    <property type="term" value="C:cytosolic small ribosomal subunit"/>
    <property type="evidence" value="ECO:0007669"/>
    <property type="project" value="TreeGrafter"/>
</dbReference>
<dbReference type="GO" id="GO:0003723">
    <property type="term" value="F:RNA binding"/>
    <property type="evidence" value="ECO:0007669"/>
    <property type="project" value="TreeGrafter"/>
</dbReference>
<dbReference type="GO" id="GO:0003735">
    <property type="term" value="F:structural constituent of ribosome"/>
    <property type="evidence" value="ECO:0007669"/>
    <property type="project" value="InterPro"/>
</dbReference>
<dbReference type="GO" id="GO:0006412">
    <property type="term" value="P:translation"/>
    <property type="evidence" value="ECO:0007669"/>
    <property type="project" value="UniProtKB-UniRule"/>
</dbReference>
<dbReference type="FunFam" id="3.30.230.10:FF:000001">
    <property type="entry name" value="30S ribosomal protein S9"/>
    <property type="match status" value="1"/>
</dbReference>
<dbReference type="Gene3D" id="3.30.230.10">
    <property type="match status" value="1"/>
</dbReference>
<dbReference type="HAMAP" id="MF_00532_B">
    <property type="entry name" value="Ribosomal_uS9_B"/>
    <property type="match status" value="1"/>
</dbReference>
<dbReference type="InterPro" id="IPR020568">
    <property type="entry name" value="Ribosomal_Su5_D2-typ_SF"/>
</dbReference>
<dbReference type="InterPro" id="IPR000754">
    <property type="entry name" value="Ribosomal_uS9"/>
</dbReference>
<dbReference type="InterPro" id="IPR023035">
    <property type="entry name" value="Ribosomal_uS9_bac/plastid"/>
</dbReference>
<dbReference type="InterPro" id="IPR020574">
    <property type="entry name" value="Ribosomal_uS9_CS"/>
</dbReference>
<dbReference type="InterPro" id="IPR014721">
    <property type="entry name" value="Ribsml_uS5_D2-typ_fold_subgr"/>
</dbReference>
<dbReference type="NCBIfam" id="NF001099">
    <property type="entry name" value="PRK00132.1"/>
    <property type="match status" value="1"/>
</dbReference>
<dbReference type="PANTHER" id="PTHR21569">
    <property type="entry name" value="RIBOSOMAL PROTEIN S9"/>
    <property type="match status" value="1"/>
</dbReference>
<dbReference type="PANTHER" id="PTHR21569:SF1">
    <property type="entry name" value="SMALL RIBOSOMAL SUBUNIT PROTEIN US9M"/>
    <property type="match status" value="1"/>
</dbReference>
<dbReference type="Pfam" id="PF00380">
    <property type="entry name" value="Ribosomal_S9"/>
    <property type="match status" value="1"/>
</dbReference>
<dbReference type="SUPFAM" id="SSF54211">
    <property type="entry name" value="Ribosomal protein S5 domain 2-like"/>
    <property type="match status" value="1"/>
</dbReference>
<dbReference type="PROSITE" id="PS00360">
    <property type="entry name" value="RIBOSOMAL_S9"/>
    <property type="match status" value="1"/>
</dbReference>